<dbReference type="EC" id="2.7.7.7"/>
<dbReference type="EMBL" id="U57757">
    <property type="protein sequence ID" value="AAB17467.1"/>
    <property type="molecule type" value="Genomic_DNA"/>
</dbReference>
<dbReference type="EMBL" id="AE000520">
    <property type="protein sequence ID" value="AAC26553.1"/>
    <property type="molecule type" value="Genomic_DNA"/>
</dbReference>
<dbReference type="PIR" id="F71365">
    <property type="entry name" value="F71365"/>
</dbReference>
<dbReference type="RefSeq" id="WP_010881554.1">
    <property type="nucleotide sequence ID" value="NC_021490.2"/>
</dbReference>
<dbReference type="SMR" id="P74933"/>
<dbReference type="STRING" id="243276.TP_0105"/>
<dbReference type="EnsemblBacteria" id="AAC26553">
    <property type="protein sequence ID" value="AAC26553"/>
    <property type="gene ID" value="TP_0105"/>
</dbReference>
<dbReference type="GeneID" id="93875899"/>
<dbReference type="KEGG" id="tpa:TP_0105"/>
<dbReference type="KEGG" id="tpw:TPANIC_0105"/>
<dbReference type="eggNOG" id="COG0258">
    <property type="taxonomic scope" value="Bacteria"/>
</dbReference>
<dbReference type="eggNOG" id="COG0749">
    <property type="taxonomic scope" value="Bacteria"/>
</dbReference>
<dbReference type="eggNOG" id="COG0847">
    <property type="taxonomic scope" value="Bacteria"/>
</dbReference>
<dbReference type="HOGENOM" id="CLU_004675_0_0_12"/>
<dbReference type="OrthoDB" id="9806424at2"/>
<dbReference type="Proteomes" id="UP000000811">
    <property type="component" value="Chromosome"/>
</dbReference>
<dbReference type="GO" id="GO:0008408">
    <property type="term" value="F:3'-5' exonuclease activity"/>
    <property type="evidence" value="ECO:0007669"/>
    <property type="project" value="InterPro"/>
</dbReference>
<dbReference type="GO" id="GO:0008409">
    <property type="term" value="F:5'-3' exonuclease activity"/>
    <property type="evidence" value="ECO:0007669"/>
    <property type="project" value="InterPro"/>
</dbReference>
<dbReference type="GO" id="GO:0003677">
    <property type="term" value="F:DNA binding"/>
    <property type="evidence" value="ECO:0007669"/>
    <property type="project" value="UniProtKB-KW"/>
</dbReference>
<dbReference type="GO" id="GO:0003887">
    <property type="term" value="F:DNA-directed DNA polymerase activity"/>
    <property type="evidence" value="ECO:0007669"/>
    <property type="project" value="UniProtKB-KW"/>
</dbReference>
<dbReference type="GO" id="GO:0006261">
    <property type="term" value="P:DNA-templated DNA replication"/>
    <property type="evidence" value="ECO:0007669"/>
    <property type="project" value="InterPro"/>
</dbReference>
<dbReference type="GO" id="GO:0006302">
    <property type="term" value="P:double-strand break repair"/>
    <property type="evidence" value="ECO:0007669"/>
    <property type="project" value="TreeGrafter"/>
</dbReference>
<dbReference type="CDD" id="cd08637">
    <property type="entry name" value="DNA_pol_A_pol_I_C"/>
    <property type="match status" value="1"/>
</dbReference>
<dbReference type="CDD" id="cd06139">
    <property type="entry name" value="DNA_polA_I_Ecoli_like_exo"/>
    <property type="match status" value="1"/>
</dbReference>
<dbReference type="CDD" id="cd09898">
    <property type="entry name" value="H3TH_53EXO"/>
    <property type="match status" value="1"/>
</dbReference>
<dbReference type="CDD" id="cd09859">
    <property type="entry name" value="PIN_53EXO"/>
    <property type="match status" value="1"/>
</dbReference>
<dbReference type="FunFam" id="1.10.150.20:FF:000002">
    <property type="entry name" value="DNA polymerase I"/>
    <property type="match status" value="1"/>
</dbReference>
<dbReference type="FunFam" id="1.10.150.20:FF:000003">
    <property type="entry name" value="DNA polymerase I"/>
    <property type="match status" value="1"/>
</dbReference>
<dbReference type="FunFam" id="1.20.1060.10:FF:000001">
    <property type="entry name" value="DNA polymerase I"/>
    <property type="match status" value="1"/>
</dbReference>
<dbReference type="Gene3D" id="3.30.70.370">
    <property type="match status" value="1"/>
</dbReference>
<dbReference type="Gene3D" id="1.10.150.20">
    <property type="entry name" value="5' to 3' exonuclease, C-terminal subdomain"/>
    <property type="match status" value="2"/>
</dbReference>
<dbReference type="Gene3D" id="3.40.50.1010">
    <property type="entry name" value="5'-nuclease"/>
    <property type="match status" value="1"/>
</dbReference>
<dbReference type="Gene3D" id="3.30.420.10">
    <property type="entry name" value="Ribonuclease H-like superfamily/Ribonuclease H"/>
    <property type="match status" value="1"/>
</dbReference>
<dbReference type="Gene3D" id="1.20.1060.10">
    <property type="entry name" value="Taq DNA Polymerase, Chain T, domain 4"/>
    <property type="match status" value="1"/>
</dbReference>
<dbReference type="InterPro" id="IPR002562">
    <property type="entry name" value="3'-5'_exonuclease_dom"/>
</dbReference>
<dbReference type="InterPro" id="IPR020046">
    <property type="entry name" value="5-3_exonucl_a-hlix_arch_N"/>
</dbReference>
<dbReference type="InterPro" id="IPR002421">
    <property type="entry name" value="5-3_exonuclease"/>
</dbReference>
<dbReference type="InterPro" id="IPR036279">
    <property type="entry name" value="5-3_exonuclease_C_sf"/>
</dbReference>
<dbReference type="InterPro" id="IPR019760">
    <property type="entry name" value="DNA-dir_DNA_pol_A_CS"/>
</dbReference>
<dbReference type="InterPro" id="IPR001098">
    <property type="entry name" value="DNA-dir_DNA_pol_A_palm_dom"/>
</dbReference>
<dbReference type="InterPro" id="IPR043502">
    <property type="entry name" value="DNA/RNA_pol_sf"/>
</dbReference>
<dbReference type="InterPro" id="IPR020045">
    <property type="entry name" value="DNA_polI_H3TH"/>
</dbReference>
<dbReference type="InterPro" id="IPR018320">
    <property type="entry name" value="DNA_polymerase_1"/>
</dbReference>
<dbReference type="InterPro" id="IPR002298">
    <property type="entry name" value="DNA_polymerase_A"/>
</dbReference>
<dbReference type="InterPro" id="IPR013520">
    <property type="entry name" value="Exonuclease_RNaseT/DNA_pol3"/>
</dbReference>
<dbReference type="InterPro" id="IPR008918">
    <property type="entry name" value="HhH2"/>
</dbReference>
<dbReference type="InterPro" id="IPR029060">
    <property type="entry name" value="PIN-like_dom_sf"/>
</dbReference>
<dbReference type="InterPro" id="IPR012337">
    <property type="entry name" value="RNaseH-like_sf"/>
</dbReference>
<dbReference type="InterPro" id="IPR036397">
    <property type="entry name" value="RNaseH_sf"/>
</dbReference>
<dbReference type="NCBIfam" id="TIGR00593">
    <property type="entry name" value="pola"/>
    <property type="match status" value="1"/>
</dbReference>
<dbReference type="NCBIfam" id="NF004397">
    <property type="entry name" value="PRK05755.1"/>
    <property type="match status" value="1"/>
</dbReference>
<dbReference type="PANTHER" id="PTHR10133">
    <property type="entry name" value="DNA POLYMERASE I"/>
    <property type="match status" value="1"/>
</dbReference>
<dbReference type="PANTHER" id="PTHR10133:SF27">
    <property type="entry name" value="DNA POLYMERASE NU"/>
    <property type="match status" value="1"/>
</dbReference>
<dbReference type="Pfam" id="PF01367">
    <property type="entry name" value="5_3_exonuc"/>
    <property type="match status" value="1"/>
</dbReference>
<dbReference type="Pfam" id="PF02739">
    <property type="entry name" value="5_3_exonuc_N"/>
    <property type="match status" value="1"/>
</dbReference>
<dbReference type="Pfam" id="PF00476">
    <property type="entry name" value="DNA_pol_A"/>
    <property type="match status" value="1"/>
</dbReference>
<dbReference type="Pfam" id="PF01612">
    <property type="entry name" value="DNA_pol_A_exo1"/>
    <property type="match status" value="1"/>
</dbReference>
<dbReference type="PRINTS" id="PR00868">
    <property type="entry name" value="DNAPOLI"/>
</dbReference>
<dbReference type="SMART" id="SM00474">
    <property type="entry name" value="35EXOc"/>
    <property type="match status" value="1"/>
</dbReference>
<dbReference type="SMART" id="SM00475">
    <property type="entry name" value="53EXOc"/>
    <property type="match status" value="1"/>
</dbReference>
<dbReference type="SMART" id="SM00479">
    <property type="entry name" value="EXOIII"/>
    <property type="match status" value="1"/>
</dbReference>
<dbReference type="SMART" id="SM00279">
    <property type="entry name" value="HhH2"/>
    <property type="match status" value="1"/>
</dbReference>
<dbReference type="SMART" id="SM00482">
    <property type="entry name" value="POLAc"/>
    <property type="match status" value="1"/>
</dbReference>
<dbReference type="SUPFAM" id="SSF47807">
    <property type="entry name" value="5' to 3' exonuclease, C-terminal subdomain"/>
    <property type="match status" value="1"/>
</dbReference>
<dbReference type="SUPFAM" id="SSF56672">
    <property type="entry name" value="DNA/RNA polymerases"/>
    <property type="match status" value="1"/>
</dbReference>
<dbReference type="SUPFAM" id="SSF88723">
    <property type="entry name" value="PIN domain-like"/>
    <property type="match status" value="1"/>
</dbReference>
<dbReference type="SUPFAM" id="SSF53098">
    <property type="entry name" value="Ribonuclease H-like"/>
    <property type="match status" value="1"/>
</dbReference>
<dbReference type="PROSITE" id="PS00447">
    <property type="entry name" value="DNA_POLYMERASE_A"/>
    <property type="match status" value="1"/>
</dbReference>
<reference key="1">
    <citation type="journal article" date="2000" name="J. Med. Microbiol.">
        <title>Molecular cloning of a gene (polA) coding for an unusual DNA polymerase I from Treponema pallidum.</title>
        <authorList>
            <person name="Rodes B."/>
            <person name="Liu H."/>
            <person name="Johnson S."/>
            <person name="George R."/>
            <person name="Steiner B.M."/>
        </authorList>
    </citation>
    <scope>NUCLEOTIDE SEQUENCE [GENOMIC DNA]</scope>
    <source>
        <strain>Nichols</strain>
    </source>
</reference>
<reference key="2">
    <citation type="journal article" date="1998" name="Science">
        <title>Complete genome sequence of Treponema pallidum, the syphilis spirochete.</title>
        <authorList>
            <person name="Fraser C.M."/>
            <person name="Norris S.J."/>
            <person name="Weinstock G.M."/>
            <person name="White O."/>
            <person name="Sutton G.G."/>
            <person name="Dodson R.J."/>
            <person name="Gwinn M.L."/>
            <person name="Hickey E.K."/>
            <person name="Clayton R.A."/>
            <person name="Ketchum K.A."/>
            <person name="Sodergren E."/>
            <person name="Hardham J.M."/>
            <person name="McLeod M.P."/>
            <person name="Salzberg S.L."/>
            <person name="Peterson J.D."/>
            <person name="Khalak H.G."/>
            <person name="Richardson D.L."/>
            <person name="Howell J.K."/>
            <person name="Chidambaram M."/>
            <person name="Utterback T.R."/>
            <person name="McDonald L.A."/>
            <person name="Artiach P."/>
            <person name="Bowman C."/>
            <person name="Cotton M.D."/>
            <person name="Fujii C."/>
            <person name="Garland S.A."/>
            <person name="Hatch B."/>
            <person name="Horst K."/>
            <person name="Roberts K.M."/>
            <person name="Sandusky M."/>
            <person name="Weidman J.F."/>
            <person name="Smith H.O."/>
            <person name="Venter J.C."/>
        </authorList>
    </citation>
    <scope>NUCLEOTIDE SEQUENCE [LARGE SCALE GENOMIC DNA]</scope>
    <source>
        <strain>Nichols</strain>
    </source>
</reference>
<sequence length="997" mass="112217">MQEKKTLYLLDAYGLIYRSYHAFARAPLINDSGANVSAVYGFFRSLHTLLCHYRPRYFVAVFDSLTPTFRHVQYPAYKAKRDKTSAELYAQIPLIEEILCALGITVLRHDGFEADDLIATLAKRVAAEHCHVVIISSDKDVLQLVCDTVQVLRLDIDHKWTCCDAAYVQQRWTVMPTQLLDLFSLMGDSSDNVPGVRGIGPKTAAHLLHCFGTLDGIYRHTYSLKEALRTKIVCGKKDAFFSRSLIELRDDVPCVFSLEDSCCIPLDVTSAARIFVREGLHALAQQYRACVQEIDTEATNDTLQMTESSVLTSGRCANECFLSQVEGRASTPEVNSVLKSELKTSAVSGAIPIENRDLRQDVMLARSAGHYRGVTDPVELKRIIDCACANGVVAFDCETDGLHPHDTRLVGFSICFQEAEAFYVPLIVPDVSLHTESTQCTCARSTNVETEKECTEQHGVSASAVQDPAYVQAVMHQLRRLWNDETLTLVMHNGKFDYHVMHRAGVFEHCACNIFDTMVAAWLLDPDRGTYGMDVLAASFFQIRTITFEEVVAKGQTFAHVPYECAVRYAAEDADITFRLYHYLKLRLETAGLLSVFETIEMPLLPILARMEEVGIFLRKDVVQQLTRSFSDLIQQYEHDIFSLAGHEFNIGSPKQLQTVLFQELHLPPGKKNTQGYSTDHSVLKKLARKHPIAEKILLFRDLSKLRSTYTESLAKLADQTGRVHTSFVQIGTATGRLSSRNPNLQNIPIKSTEGRKIRQAFQATVGHELISADYTQIELVVLAHLSQDRNLLNAFRQHIDIHALTAAYIFNVSIDDVQPAMRRIAKTINFGIVYGMSAFRLSDELKISQKEAQSFIYRYFETYPGVYAFSTQVAEQTRKTGYVTSLAGRRRYIRTIDSRNTLERARAERMALNTQIQSSAADIVKIAMIAIQRAFARRPLRAQLLLQVHDELIFEAPAAETAIVKEILFAEMEHAVELSIPLRIHVESGNSWGDFH</sequence>
<feature type="chain" id="PRO_0000101261" description="DNA polymerase I">
    <location>
        <begin position="1"/>
        <end position="997"/>
    </location>
</feature>
<feature type="domain" description="5'-3' exonuclease" evidence="2">
    <location>
        <begin position="174"/>
        <end position="261"/>
    </location>
</feature>
<feature type="domain" description="3'-5' exonuclease" evidence="2">
    <location>
        <begin position="428"/>
        <end position="589"/>
    </location>
</feature>
<feature type="sequence conflict" description="In Ref. 1; AAB17467." evidence="3" ref="1">
    <original>V</original>
    <variation>A</variation>
    <location>
        <position position="782"/>
    </location>
</feature>
<evidence type="ECO:0000250" key="1"/>
<evidence type="ECO:0000255" key="2"/>
<evidence type="ECO:0000305" key="3"/>
<keyword id="KW-0227">DNA damage</keyword>
<keyword id="KW-0234">DNA repair</keyword>
<keyword id="KW-0235">DNA replication</keyword>
<keyword id="KW-0238">DNA-binding</keyword>
<keyword id="KW-0239">DNA-directed DNA polymerase</keyword>
<keyword id="KW-0269">Exonuclease</keyword>
<keyword id="KW-0378">Hydrolase</keyword>
<keyword id="KW-0540">Nuclease</keyword>
<keyword id="KW-0548">Nucleotidyltransferase</keyword>
<keyword id="KW-1185">Reference proteome</keyword>
<keyword id="KW-0808">Transferase</keyword>
<name>DPO1_TREPA</name>
<comment type="function">
    <text evidence="1">In addition to polymerase activity, this DNA polymerase exhibits 3'-5' and 5'-3' exonuclease activity.</text>
</comment>
<comment type="catalytic activity">
    <reaction>
        <text>DNA(n) + a 2'-deoxyribonucleoside 5'-triphosphate = DNA(n+1) + diphosphate</text>
        <dbReference type="Rhea" id="RHEA:22508"/>
        <dbReference type="Rhea" id="RHEA-COMP:17339"/>
        <dbReference type="Rhea" id="RHEA-COMP:17340"/>
        <dbReference type="ChEBI" id="CHEBI:33019"/>
        <dbReference type="ChEBI" id="CHEBI:61560"/>
        <dbReference type="ChEBI" id="CHEBI:173112"/>
        <dbReference type="EC" id="2.7.7.7"/>
    </reaction>
</comment>
<comment type="similarity">
    <text evidence="3">Belongs to the DNA polymerase type-A family.</text>
</comment>
<proteinExistence type="inferred from homology"/>
<protein>
    <recommendedName>
        <fullName>DNA polymerase I</fullName>
        <shortName>POL I</shortName>
        <ecNumber>2.7.7.7</ecNumber>
    </recommendedName>
</protein>
<gene>
    <name type="primary">polA</name>
    <name type="ordered locus">TP_0105</name>
</gene>
<accession>P74933</accession>
<accession>O83143</accession>
<organism>
    <name type="scientific">Treponema pallidum (strain Nichols)</name>
    <dbReference type="NCBI Taxonomy" id="243276"/>
    <lineage>
        <taxon>Bacteria</taxon>
        <taxon>Pseudomonadati</taxon>
        <taxon>Spirochaetota</taxon>
        <taxon>Spirochaetia</taxon>
        <taxon>Spirochaetales</taxon>
        <taxon>Treponemataceae</taxon>
        <taxon>Treponema</taxon>
    </lineage>
</organism>